<comment type="function">
    <text evidence="1">Transfers a succinyl group from succinyl-CoA to L-homoserine, forming succinyl-L-homoserine.</text>
</comment>
<comment type="catalytic activity">
    <reaction evidence="1">
        <text>L-homoserine + succinyl-CoA = O-succinyl-L-homoserine + CoA</text>
        <dbReference type="Rhea" id="RHEA:22008"/>
        <dbReference type="ChEBI" id="CHEBI:57287"/>
        <dbReference type="ChEBI" id="CHEBI:57292"/>
        <dbReference type="ChEBI" id="CHEBI:57476"/>
        <dbReference type="ChEBI" id="CHEBI:57661"/>
        <dbReference type="EC" id="2.3.1.46"/>
    </reaction>
</comment>
<comment type="pathway">
    <text evidence="1">Amino-acid biosynthesis; L-methionine biosynthesis via de novo pathway; O-succinyl-L-homoserine from L-homoserine: step 1/1.</text>
</comment>
<comment type="subunit">
    <text evidence="1">Homodimer.</text>
</comment>
<comment type="subcellular location">
    <subcellularLocation>
        <location evidence="1">Cytoplasm</location>
    </subcellularLocation>
</comment>
<comment type="similarity">
    <text evidence="1">Belongs to the MetA family.</text>
</comment>
<organism>
    <name type="scientific">Escherichia coli O1:K1 / APEC</name>
    <dbReference type="NCBI Taxonomy" id="405955"/>
    <lineage>
        <taxon>Bacteria</taxon>
        <taxon>Pseudomonadati</taxon>
        <taxon>Pseudomonadota</taxon>
        <taxon>Gammaproteobacteria</taxon>
        <taxon>Enterobacterales</taxon>
        <taxon>Enterobacteriaceae</taxon>
        <taxon>Escherichia</taxon>
    </lineage>
</organism>
<protein>
    <recommendedName>
        <fullName evidence="1">Homoserine O-succinyltransferase</fullName>
        <shortName evidence="1">HST</shortName>
        <ecNumber evidence="1">2.3.1.46</ecNumber>
    </recommendedName>
    <alternativeName>
        <fullName evidence="1">Homoserine transsuccinylase</fullName>
        <shortName evidence="1">HTS</shortName>
    </alternativeName>
</protein>
<reference key="1">
    <citation type="journal article" date="2007" name="J. Bacteriol.">
        <title>The genome sequence of avian pathogenic Escherichia coli strain O1:K1:H7 shares strong similarities with human extraintestinal pathogenic E. coli genomes.</title>
        <authorList>
            <person name="Johnson T.J."/>
            <person name="Kariyawasam S."/>
            <person name="Wannemuehler Y."/>
            <person name="Mangiamele P."/>
            <person name="Johnson S.J."/>
            <person name="Doetkott C."/>
            <person name="Skyberg J.A."/>
            <person name="Lynne A.M."/>
            <person name="Johnson J.R."/>
            <person name="Nolan L.K."/>
        </authorList>
    </citation>
    <scope>NUCLEOTIDE SEQUENCE [LARGE SCALE GENOMIC DNA]</scope>
</reference>
<sequence length="309" mass="35743">MPIRVPDELPAVNFLREENVFVMTTSRASGQEIRPLKVLILNLMPKKIETENQFLRLLSNSPLQVDIQLLRIDSRESRNTPAEHLNNFYCNFEDIQEQNFDGLIVTGAPLGLVEFNDVAYWPQIKQVLEWSKDHVTSTLFVCWAVQAALNILYGIPKQTRTDKLSGVYEHHILHPHALLTRGFDDSFLAPHSRYADFPAALIRDYTDLEILAETEEGDAYLFASKDKRIAFVTGHPEYDAQTLAQEYFRDVEAGLDPDVPYNYFPHNDPQNTPRASWRSHGNLLFTNWLNYYVYQITPYDLRHMNPTLD</sequence>
<accession>A1AII3</accession>
<evidence type="ECO:0000255" key="1">
    <source>
        <dbReference type="HAMAP-Rule" id="MF_00295"/>
    </source>
</evidence>
<gene>
    <name evidence="1" type="primary">metAS</name>
    <name type="ordered locus">Ecok1_39790</name>
    <name type="ORF">APECO1_2463</name>
</gene>
<name>METAS_ECOK1</name>
<feature type="chain" id="PRO_1000021811" description="Homoserine O-succinyltransferase">
    <location>
        <begin position="1"/>
        <end position="309"/>
    </location>
</feature>
<feature type="active site" description="Acyl-thioester intermediate" evidence="1">
    <location>
        <position position="142"/>
    </location>
</feature>
<feature type="active site" description="Proton acceptor" evidence="1">
    <location>
        <position position="235"/>
    </location>
</feature>
<feature type="active site" evidence="1">
    <location>
        <position position="237"/>
    </location>
</feature>
<feature type="binding site" evidence="1">
    <location>
        <position position="163"/>
    </location>
    <ligand>
        <name>substrate</name>
    </ligand>
</feature>
<feature type="binding site" evidence="1">
    <location>
        <position position="192"/>
    </location>
    <ligand>
        <name>substrate</name>
    </ligand>
</feature>
<feature type="binding site" evidence="1">
    <location>
        <position position="249"/>
    </location>
    <ligand>
        <name>substrate</name>
    </ligand>
</feature>
<feature type="site" description="Important for acyl-CoA specificity" evidence="1">
    <location>
        <position position="111"/>
    </location>
</feature>
<feature type="site" description="Important for substrate specificity" evidence="1">
    <location>
        <position position="192"/>
    </location>
</feature>
<dbReference type="EC" id="2.3.1.46" evidence="1"/>
<dbReference type="EMBL" id="CP000468">
    <property type="protein sequence ID" value="ABJ03473.1"/>
    <property type="molecule type" value="Genomic_DNA"/>
</dbReference>
<dbReference type="SMR" id="A1AII3"/>
<dbReference type="KEGG" id="ecv:APECO1_2463"/>
<dbReference type="HOGENOM" id="CLU_057851_0_1_6"/>
<dbReference type="UniPathway" id="UPA00051">
    <property type="reaction ID" value="UER00075"/>
</dbReference>
<dbReference type="Proteomes" id="UP000008216">
    <property type="component" value="Chromosome"/>
</dbReference>
<dbReference type="GO" id="GO:0005737">
    <property type="term" value="C:cytoplasm"/>
    <property type="evidence" value="ECO:0007669"/>
    <property type="project" value="UniProtKB-SubCell"/>
</dbReference>
<dbReference type="GO" id="GO:0004414">
    <property type="term" value="F:homoserine O-acetyltransferase activity"/>
    <property type="evidence" value="ECO:0007669"/>
    <property type="project" value="UniProtKB-UniRule"/>
</dbReference>
<dbReference type="GO" id="GO:0008899">
    <property type="term" value="F:homoserine O-succinyltransferase activity"/>
    <property type="evidence" value="ECO:0007669"/>
    <property type="project" value="UniProtKB-EC"/>
</dbReference>
<dbReference type="GO" id="GO:0019281">
    <property type="term" value="P:L-methionine biosynthetic process from homoserine via O-succinyl-L-homoserine and cystathionine"/>
    <property type="evidence" value="ECO:0007669"/>
    <property type="project" value="InterPro"/>
</dbReference>
<dbReference type="CDD" id="cd03131">
    <property type="entry name" value="GATase1_HTS"/>
    <property type="match status" value="1"/>
</dbReference>
<dbReference type="FunFam" id="3.40.50.880:FF:000004">
    <property type="entry name" value="Homoserine O-succinyltransferase"/>
    <property type="match status" value="1"/>
</dbReference>
<dbReference type="Gene3D" id="3.40.50.880">
    <property type="match status" value="1"/>
</dbReference>
<dbReference type="HAMAP" id="MF_00295">
    <property type="entry name" value="MetA_acyltransf"/>
    <property type="match status" value="1"/>
</dbReference>
<dbReference type="InterPro" id="IPR029062">
    <property type="entry name" value="Class_I_gatase-like"/>
</dbReference>
<dbReference type="InterPro" id="IPR005697">
    <property type="entry name" value="HST_MetA"/>
</dbReference>
<dbReference type="InterPro" id="IPR033752">
    <property type="entry name" value="MetA_family"/>
</dbReference>
<dbReference type="NCBIfam" id="TIGR01001">
    <property type="entry name" value="metA"/>
    <property type="match status" value="1"/>
</dbReference>
<dbReference type="PANTHER" id="PTHR20919">
    <property type="entry name" value="HOMOSERINE O-SUCCINYLTRANSFERASE"/>
    <property type="match status" value="1"/>
</dbReference>
<dbReference type="PANTHER" id="PTHR20919:SF0">
    <property type="entry name" value="HOMOSERINE O-SUCCINYLTRANSFERASE"/>
    <property type="match status" value="1"/>
</dbReference>
<dbReference type="Pfam" id="PF04204">
    <property type="entry name" value="HTS"/>
    <property type="match status" value="1"/>
</dbReference>
<dbReference type="PIRSF" id="PIRSF000450">
    <property type="entry name" value="H_ser_succinyltr"/>
    <property type="match status" value="1"/>
</dbReference>
<dbReference type="SUPFAM" id="SSF52317">
    <property type="entry name" value="Class I glutamine amidotransferase-like"/>
    <property type="match status" value="1"/>
</dbReference>
<proteinExistence type="inferred from homology"/>
<keyword id="KW-0012">Acyltransferase</keyword>
<keyword id="KW-0028">Amino-acid biosynthesis</keyword>
<keyword id="KW-0963">Cytoplasm</keyword>
<keyword id="KW-0486">Methionine biosynthesis</keyword>
<keyword id="KW-1185">Reference proteome</keyword>
<keyword id="KW-0808">Transferase</keyword>